<organism>
    <name type="scientific">Francisella tularensis subsp. mediasiatica (strain FSC147)</name>
    <dbReference type="NCBI Taxonomy" id="441952"/>
    <lineage>
        <taxon>Bacteria</taxon>
        <taxon>Pseudomonadati</taxon>
        <taxon>Pseudomonadota</taxon>
        <taxon>Gammaproteobacteria</taxon>
        <taxon>Thiotrichales</taxon>
        <taxon>Francisellaceae</taxon>
        <taxon>Francisella</taxon>
    </lineage>
</organism>
<gene>
    <name evidence="1" type="primary">lgt</name>
    <name type="ordered locus">FTM_0715</name>
</gene>
<accession>B2SG34</accession>
<name>LGT_FRATM</name>
<reference key="1">
    <citation type="journal article" date="2009" name="PLoS Pathog.">
        <title>Molecular evolutionary consequences of niche restriction in Francisella tularensis, a facultative intracellular pathogen.</title>
        <authorList>
            <person name="Larsson P."/>
            <person name="Elfsmark D."/>
            <person name="Svensson K."/>
            <person name="Wikstroem P."/>
            <person name="Forsman M."/>
            <person name="Brettin T."/>
            <person name="Keim P."/>
            <person name="Johansson A."/>
        </authorList>
    </citation>
    <scope>NUCLEOTIDE SEQUENCE [LARGE SCALE GENOMIC DNA]</scope>
    <source>
        <strain>FSC147</strain>
    </source>
</reference>
<dbReference type="EC" id="2.5.1.145" evidence="1"/>
<dbReference type="EMBL" id="CP000915">
    <property type="protein sequence ID" value="ACD30693.1"/>
    <property type="molecule type" value="Genomic_DNA"/>
</dbReference>
<dbReference type="SMR" id="B2SG34"/>
<dbReference type="KEGG" id="ftm:FTM_0715"/>
<dbReference type="HOGENOM" id="CLU_013386_1_0_6"/>
<dbReference type="UniPathway" id="UPA00664"/>
<dbReference type="GO" id="GO:0005886">
    <property type="term" value="C:plasma membrane"/>
    <property type="evidence" value="ECO:0007669"/>
    <property type="project" value="UniProtKB-SubCell"/>
</dbReference>
<dbReference type="GO" id="GO:0008961">
    <property type="term" value="F:phosphatidylglycerol-prolipoprotein diacylglyceryl transferase activity"/>
    <property type="evidence" value="ECO:0007669"/>
    <property type="project" value="UniProtKB-UniRule"/>
</dbReference>
<dbReference type="GO" id="GO:0042158">
    <property type="term" value="P:lipoprotein biosynthetic process"/>
    <property type="evidence" value="ECO:0007669"/>
    <property type="project" value="UniProtKB-UniRule"/>
</dbReference>
<dbReference type="HAMAP" id="MF_01147">
    <property type="entry name" value="Lgt"/>
    <property type="match status" value="1"/>
</dbReference>
<dbReference type="InterPro" id="IPR001640">
    <property type="entry name" value="Lgt"/>
</dbReference>
<dbReference type="NCBIfam" id="TIGR00544">
    <property type="entry name" value="lgt"/>
    <property type="match status" value="1"/>
</dbReference>
<dbReference type="PANTHER" id="PTHR30589:SF0">
    <property type="entry name" value="PHOSPHATIDYLGLYCEROL--PROLIPOPROTEIN DIACYLGLYCERYL TRANSFERASE"/>
    <property type="match status" value="1"/>
</dbReference>
<dbReference type="PANTHER" id="PTHR30589">
    <property type="entry name" value="PROLIPOPROTEIN DIACYLGLYCERYL TRANSFERASE"/>
    <property type="match status" value="1"/>
</dbReference>
<dbReference type="Pfam" id="PF01790">
    <property type="entry name" value="LGT"/>
    <property type="match status" value="1"/>
</dbReference>
<dbReference type="PROSITE" id="PS01311">
    <property type="entry name" value="LGT"/>
    <property type="match status" value="1"/>
</dbReference>
<keyword id="KW-0997">Cell inner membrane</keyword>
<keyword id="KW-1003">Cell membrane</keyword>
<keyword id="KW-0472">Membrane</keyword>
<keyword id="KW-0808">Transferase</keyword>
<keyword id="KW-0812">Transmembrane</keyword>
<keyword id="KW-1133">Transmembrane helix</keyword>
<proteinExistence type="inferred from homology"/>
<protein>
    <recommendedName>
        <fullName evidence="1">Phosphatidylglycerol--prolipoprotein diacylglyceryl transferase</fullName>
        <ecNumber evidence="1">2.5.1.145</ecNumber>
    </recommendedName>
</protein>
<feature type="chain" id="PRO_1000137431" description="Phosphatidylglycerol--prolipoprotein diacylglyceryl transferase">
    <location>
        <begin position="1"/>
        <end position="268"/>
    </location>
</feature>
<feature type="transmembrane region" description="Helical" evidence="1">
    <location>
        <begin position="14"/>
        <end position="34"/>
    </location>
</feature>
<feature type="transmembrane region" description="Helical" evidence="1">
    <location>
        <begin position="57"/>
        <end position="77"/>
    </location>
</feature>
<feature type="transmembrane region" description="Helical" evidence="1">
    <location>
        <begin position="90"/>
        <end position="110"/>
    </location>
</feature>
<feature type="transmembrane region" description="Helical" evidence="1">
    <location>
        <begin position="117"/>
        <end position="137"/>
    </location>
</feature>
<feature type="transmembrane region" description="Helical" evidence="1">
    <location>
        <begin position="174"/>
        <end position="194"/>
    </location>
</feature>
<feature type="transmembrane region" description="Helical" evidence="1">
    <location>
        <begin position="200"/>
        <end position="220"/>
    </location>
</feature>
<feature type="transmembrane region" description="Helical" evidence="1">
    <location>
        <begin position="238"/>
        <end position="258"/>
    </location>
</feature>
<feature type="binding site" evidence="1">
    <location>
        <position position="140"/>
    </location>
    <ligand>
        <name>a 1,2-diacyl-sn-glycero-3-phospho-(1'-sn-glycerol)</name>
        <dbReference type="ChEBI" id="CHEBI:64716"/>
    </ligand>
</feature>
<evidence type="ECO:0000255" key="1">
    <source>
        <dbReference type="HAMAP-Rule" id="MF_01147"/>
    </source>
</evidence>
<comment type="function">
    <text evidence="1">Catalyzes the transfer of the diacylglyceryl group from phosphatidylglycerol to the sulfhydryl group of the N-terminal cysteine of a prolipoprotein, the first step in the formation of mature lipoproteins.</text>
</comment>
<comment type="catalytic activity">
    <reaction evidence="1">
        <text>L-cysteinyl-[prolipoprotein] + a 1,2-diacyl-sn-glycero-3-phospho-(1'-sn-glycerol) = an S-1,2-diacyl-sn-glyceryl-L-cysteinyl-[prolipoprotein] + sn-glycerol 1-phosphate + H(+)</text>
        <dbReference type="Rhea" id="RHEA:56712"/>
        <dbReference type="Rhea" id="RHEA-COMP:14679"/>
        <dbReference type="Rhea" id="RHEA-COMP:14680"/>
        <dbReference type="ChEBI" id="CHEBI:15378"/>
        <dbReference type="ChEBI" id="CHEBI:29950"/>
        <dbReference type="ChEBI" id="CHEBI:57685"/>
        <dbReference type="ChEBI" id="CHEBI:64716"/>
        <dbReference type="ChEBI" id="CHEBI:140658"/>
        <dbReference type="EC" id="2.5.1.145"/>
    </reaction>
</comment>
<comment type="pathway">
    <text evidence="1">Protein modification; lipoprotein biosynthesis (diacylglyceryl transfer).</text>
</comment>
<comment type="subcellular location">
    <subcellularLocation>
        <location evidence="1">Cell inner membrane</location>
        <topology evidence="1">Multi-pass membrane protein</topology>
    </subcellularLocation>
</comment>
<comment type="similarity">
    <text evidence="1">Belongs to the Lgt family.</text>
</comment>
<sequence>MLQYPHINPVALQLGPIKIHWYGLMYLLGIFAGWYLTRYRAKVKPWAPIKPEQVGDLTFYVALGVILGGRIGYIIFYNLPYYFHNPSQMFFLWDGGMSFHGGFIGVLIAFALFARKIGANFFDLGEFIAPVIPIGLGAGRIGNFINGELWGKVTDSPLGMVFPTGGPLPRYPSQLFEFFFEGVVLFSVLWLVTIKKRPRYLVLGLFMFLYGCARFICEFFRQPDPQYGYIFFNWMTMGQILSIPMILLGAVILIAVFIKTRKNKCENI</sequence>